<protein>
    <recommendedName>
        <fullName evidence="1">Small ribosomal subunit protein bS16</fullName>
    </recommendedName>
    <alternativeName>
        <fullName evidence="2">30S ribosomal protein S16</fullName>
    </alternativeName>
</protein>
<evidence type="ECO:0000255" key="1">
    <source>
        <dbReference type="HAMAP-Rule" id="MF_00385"/>
    </source>
</evidence>
<evidence type="ECO:0000305" key="2"/>
<keyword id="KW-0687">Ribonucleoprotein</keyword>
<keyword id="KW-0689">Ribosomal protein</keyword>
<reference key="1">
    <citation type="journal article" date="2008" name="J. Bacteriol.">
        <title>Genome sequence of Lactobacillus helveticus: an organism distinguished by selective gene loss and IS element expansion.</title>
        <authorList>
            <person name="Callanan M."/>
            <person name="Kaleta P."/>
            <person name="O'Callaghan J."/>
            <person name="O'Sullivan O."/>
            <person name="Jordan K."/>
            <person name="McAuliffe O."/>
            <person name="Sangrador-Vegas A."/>
            <person name="Slattery L."/>
            <person name="Fitzgerald G.F."/>
            <person name="Beresford T."/>
            <person name="Ross R.P."/>
        </authorList>
    </citation>
    <scope>NUCLEOTIDE SEQUENCE [LARGE SCALE GENOMIC DNA]</scope>
    <source>
        <strain>DPC 4571</strain>
    </source>
</reference>
<comment type="similarity">
    <text evidence="1">Belongs to the bacterial ribosomal protein bS16 family.</text>
</comment>
<accession>A8YVT4</accession>
<name>RS16_LACH4</name>
<gene>
    <name evidence="1" type="primary">rpsP</name>
    <name type="ordered locus">lhv_1371</name>
</gene>
<feature type="chain" id="PRO_1000072196" description="Small ribosomal subunit protein bS16">
    <location>
        <begin position="1"/>
        <end position="90"/>
    </location>
</feature>
<organism>
    <name type="scientific">Lactobacillus helveticus (strain DPC 4571)</name>
    <dbReference type="NCBI Taxonomy" id="405566"/>
    <lineage>
        <taxon>Bacteria</taxon>
        <taxon>Bacillati</taxon>
        <taxon>Bacillota</taxon>
        <taxon>Bacilli</taxon>
        <taxon>Lactobacillales</taxon>
        <taxon>Lactobacillaceae</taxon>
        <taxon>Lactobacillus</taxon>
    </lineage>
</organism>
<dbReference type="EMBL" id="CP000517">
    <property type="protein sequence ID" value="ABX27369.1"/>
    <property type="molecule type" value="Genomic_DNA"/>
</dbReference>
<dbReference type="RefSeq" id="WP_003627549.1">
    <property type="nucleotide sequence ID" value="NC_010080.1"/>
</dbReference>
<dbReference type="SMR" id="A8YVT4"/>
<dbReference type="GeneID" id="83725644"/>
<dbReference type="KEGG" id="lhe:lhv_1371"/>
<dbReference type="eggNOG" id="COG0228">
    <property type="taxonomic scope" value="Bacteria"/>
</dbReference>
<dbReference type="HOGENOM" id="CLU_100590_5_0_9"/>
<dbReference type="Proteomes" id="UP000000790">
    <property type="component" value="Chromosome"/>
</dbReference>
<dbReference type="GO" id="GO:0005737">
    <property type="term" value="C:cytoplasm"/>
    <property type="evidence" value="ECO:0007669"/>
    <property type="project" value="UniProtKB-ARBA"/>
</dbReference>
<dbReference type="GO" id="GO:0015935">
    <property type="term" value="C:small ribosomal subunit"/>
    <property type="evidence" value="ECO:0007669"/>
    <property type="project" value="TreeGrafter"/>
</dbReference>
<dbReference type="GO" id="GO:0003735">
    <property type="term" value="F:structural constituent of ribosome"/>
    <property type="evidence" value="ECO:0007669"/>
    <property type="project" value="InterPro"/>
</dbReference>
<dbReference type="GO" id="GO:0006412">
    <property type="term" value="P:translation"/>
    <property type="evidence" value="ECO:0007669"/>
    <property type="project" value="UniProtKB-UniRule"/>
</dbReference>
<dbReference type="FunFam" id="3.30.1320.10:FF:000002">
    <property type="entry name" value="30S ribosomal protein S16"/>
    <property type="match status" value="1"/>
</dbReference>
<dbReference type="Gene3D" id="3.30.1320.10">
    <property type="match status" value="1"/>
</dbReference>
<dbReference type="HAMAP" id="MF_00385">
    <property type="entry name" value="Ribosomal_bS16"/>
    <property type="match status" value="1"/>
</dbReference>
<dbReference type="InterPro" id="IPR000307">
    <property type="entry name" value="Ribosomal_bS16"/>
</dbReference>
<dbReference type="InterPro" id="IPR023803">
    <property type="entry name" value="Ribosomal_bS16_dom_sf"/>
</dbReference>
<dbReference type="NCBIfam" id="TIGR00002">
    <property type="entry name" value="S16"/>
    <property type="match status" value="1"/>
</dbReference>
<dbReference type="PANTHER" id="PTHR12919">
    <property type="entry name" value="30S RIBOSOMAL PROTEIN S16"/>
    <property type="match status" value="1"/>
</dbReference>
<dbReference type="PANTHER" id="PTHR12919:SF20">
    <property type="entry name" value="SMALL RIBOSOMAL SUBUNIT PROTEIN BS16M"/>
    <property type="match status" value="1"/>
</dbReference>
<dbReference type="Pfam" id="PF00886">
    <property type="entry name" value="Ribosomal_S16"/>
    <property type="match status" value="1"/>
</dbReference>
<dbReference type="SUPFAM" id="SSF54565">
    <property type="entry name" value="Ribosomal protein S16"/>
    <property type="match status" value="1"/>
</dbReference>
<proteinExistence type="inferred from homology"/>
<sequence length="90" mass="10381">MSVKIRMHRAGAKRKPFYRIVVADSRMPRDGRFIEQVGYYNPVSQPKELKLDEDKIFDWLQKGAQPSDTVRSLLSGAGLMTKLHDAKYNK</sequence>